<dbReference type="EMBL" id="J00750">
    <property type="protein sequence ID" value="AAA41590.1"/>
    <property type="molecule type" value="mRNA"/>
</dbReference>
<dbReference type="EMBL" id="M11794">
    <property type="protein sequence ID" value="AAA41641.1"/>
    <property type="molecule type" value="Genomic_DNA"/>
</dbReference>
<dbReference type="EMBL" id="BC058442">
    <property type="protein sequence ID" value="AAH58442.1"/>
    <property type="molecule type" value="mRNA"/>
</dbReference>
<dbReference type="EMBL" id="M24327">
    <property type="protein sequence ID" value="AAA41589.1"/>
    <property type="molecule type" value="mRNA"/>
</dbReference>
<dbReference type="PIR" id="A93079">
    <property type="entry name" value="SMRT1"/>
</dbReference>
<dbReference type="RefSeq" id="NP_620181.1">
    <property type="nucleotide sequence ID" value="NM_138826.4"/>
</dbReference>
<dbReference type="SMR" id="P02803"/>
<dbReference type="FunCoup" id="P02803">
    <property type="interactions" value="7"/>
</dbReference>
<dbReference type="STRING" id="10116.ENSRNOP00000054706"/>
<dbReference type="iPTMnet" id="P02803"/>
<dbReference type="PhosphoSitePlus" id="P02803"/>
<dbReference type="PaxDb" id="10116-ENSRNOP00000030623"/>
<dbReference type="Ensembl" id="ENSRNOT00000038212.6">
    <property type="protein sequence ID" value="ENSRNOP00000030623.6"/>
    <property type="gene ID" value="ENSRNOG00000025764.6"/>
</dbReference>
<dbReference type="Ensembl" id="ENSRNOT00000057898.4">
    <property type="protein sequence ID" value="ENSRNOP00000054706.1"/>
    <property type="gene ID" value="ENSRNOG00000038047.4"/>
</dbReference>
<dbReference type="GeneID" id="24567"/>
<dbReference type="KEGG" id="rno:24567"/>
<dbReference type="UCSC" id="RGD:3117">
    <property type="organism name" value="rat"/>
</dbReference>
<dbReference type="AGR" id="RGD:3117"/>
<dbReference type="CTD" id="17748"/>
<dbReference type="RGD" id="3117">
    <property type="gene designation" value="Mt1"/>
</dbReference>
<dbReference type="eggNOG" id="KOG4738">
    <property type="taxonomic scope" value="Eukaryota"/>
</dbReference>
<dbReference type="GeneTree" id="ENSGT00950000182967"/>
<dbReference type="HOGENOM" id="CLU_171204_2_0_1"/>
<dbReference type="InParanoid" id="P02803"/>
<dbReference type="OMA" id="SEDCSCF"/>
<dbReference type="TreeFam" id="TF336054"/>
<dbReference type="PRO" id="PR:P02803"/>
<dbReference type="Proteomes" id="UP000002494">
    <property type="component" value="Chromosome 17"/>
</dbReference>
<dbReference type="Proteomes" id="UP000002494">
    <property type="component" value="Chromosome 19"/>
</dbReference>
<dbReference type="Bgee" id="ENSRNOG00000038047">
    <property type="expression patterns" value="Expressed in ovary and 19 other cell types or tissues"/>
</dbReference>
<dbReference type="ExpressionAtlas" id="P02803">
    <property type="expression patterns" value="baseline and differential"/>
</dbReference>
<dbReference type="GO" id="GO:0005737">
    <property type="term" value="C:cytoplasm"/>
    <property type="evidence" value="ECO:0000250"/>
    <property type="project" value="UniProtKB"/>
</dbReference>
<dbReference type="GO" id="GO:0005829">
    <property type="term" value="C:cytosol"/>
    <property type="evidence" value="ECO:0000266"/>
    <property type="project" value="RGD"/>
</dbReference>
<dbReference type="GO" id="GO:0005764">
    <property type="term" value="C:lysosome"/>
    <property type="evidence" value="ECO:0000266"/>
    <property type="project" value="RGD"/>
</dbReference>
<dbReference type="GO" id="GO:0005634">
    <property type="term" value="C:nucleus"/>
    <property type="evidence" value="ECO:0000250"/>
    <property type="project" value="UniProtKB"/>
</dbReference>
<dbReference type="GO" id="GO:0005507">
    <property type="term" value="F:copper ion binding"/>
    <property type="evidence" value="ECO:0000266"/>
    <property type="project" value="RGD"/>
</dbReference>
<dbReference type="GO" id="GO:0046872">
    <property type="term" value="F:metal ion binding"/>
    <property type="evidence" value="ECO:0000266"/>
    <property type="project" value="RGD"/>
</dbReference>
<dbReference type="GO" id="GO:0008270">
    <property type="term" value="F:zinc ion binding"/>
    <property type="evidence" value="ECO:0000250"/>
    <property type="project" value="UniProtKB"/>
</dbReference>
<dbReference type="GO" id="GO:0071276">
    <property type="term" value="P:cellular response to cadmium ion"/>
    <property type="evidence" value="ECO:0000266"/>
    <property type="project" value="RGD"/>
</dbReference>
<dbReference type="GO" id="GO:0071247">
    <property type="term" value="P:cellular response to chromate"/>
    <property type="evidence" value="ECO:0000266"/>
    <property type="project" value="RGD"/>
</dbReference>
<dbReference type="GO" id="GO:0071280">
    <property type="term" value="P:cellular response to copper ion"/>
    <property type="evidence" value="ECO:0000318"/>
    <property type="project" value="GO_Central"/>
</dbReference>
<dbReference type="GO" id="GO:0071294">
    <property type="term" value="P:cellular response to zinc ion"/>
    <property type="evidence" value="ECO:0000250"/>
    <property type="project" value="UniProtKB"/>
</dbReference>
<dbReference type="GO" id="GO:0010273">
    <property type="term" value="P:detoxification of copper ion"/>
    <property type="evidence" value="ECO:0000266"/>
    <property type="project" value="RGD"/>
</dbReference>
<dbReference type="GO" id="GO:0030003">
    <property type="term" value="P:intracellular monoatomic cation homeostasis"/>
    <property type="evidence" value="ECO:0000266"/>
    <property type="project" value="RGD"/>
</dbReference>
<dbReference type="GO" id="GO:0006882">
    <property type="term" value="P:intracellular zinc ion homeostasis"/>
    <property type="evidence" value="ECO:0000266"/>
    <property type="project" value="RGD"/>
</dbReference>
<dbReference type="GO" id="GO:0045926">
    <property type="term" value="P:negative regulation of growth"/>
    <property type="evidence" value="ECO:0000250"/>
    <property type="project" value="UniProtKB"/>
</dbReference>
<dbReference type="GO" id="GO:0043524">
    <property type="term" value="P:negative regulation of neuron apoptotic process"/>
    <property type="evidence" value="ECO:0000266"/>
    <property type="project" value="RGD"/>
</dbReference>
<dbReference type="GO" id="GO:0007263">
    <property type="term" value="P:nitric oxide mediated signal transduction"/>
    <property type="evidence" value="ECO:0000266"/>
    <property type="project" value="RGD"/>
</dbReference>
<dbReference type="GO" id="GO:0046686">
    <property type="term" value="P:response to cadmium ion"/>
    <property type="evidence" value="ECO:0000270"/>
    <property type="project" value="RGD"/>
</dbReference>
<dbReference type="GO" id="GO:0010043">
    <property type="term" value="P:response to zinc ion"/>
    <property type="evidence" value="ECO:0000270"/>
    <property type="project" value="RGD"/>
</dbReference>
<dbReference type="FunFam" id="4.10.10.10:FF:000001">
    <property type="entry name" value="Metallothionein"/>
    <property type="match status" value="1"/>
</dbReference>
<dbReference type="Gene3D" id="4.10.10.10">
    <property type="entry name" value="Metallothionein Isoform II"/>
    <property type="match status" value="1"/>
</dbReference>
<dbReference type="InterPro" id="IPR017854">
    <property type="entry name" value="Metalthion_dom_sf"/>
</dbReference>
<dbReference type="InterPro" id="IPR023587">
    <property type="entry name" value="Metalthion_dom_sf_vert"/>
</dbReference>
<dbReference type="InterPro" id="IPR000006">
    <property type="entry name" value="Metalthion_vert"/>
</dbReference>
<dbReference type="InterPro" id="IPR018064">
    <property type="entry name" value="Metalthion_vert_metal_BS"/>
</dbReference>
<dbReference type="PANTHER" id="PTHR23299">
    <property type="entry name" value="METALLOTHIONEIN"/>
    <property type="match status" value="1"/>
</dbReference>
<dbReference type="PANTHER" id="PTHR23299:SF55">
    <property type="entry name" value="METALLOTHIONEIN-1F"/>
    <property type="match status" value="1"/>
</dbReference>
<dbReference type="Pfam" id="PF00131">
    <property type="entry name" value="Metallothio"/>
    <property type="match status" value="1"/>
</dbReference>
<dbReference type="PRINTS" id="PR00860">
    <property type="entry name" value="MTVERTEBRATE"/>
</dbReference>
<dbReference type="SUPFAM" id="SSF57868">
    <property type="entry name" value="Metallothionein"/>
    <property type="match status" value="1"/>
</dbReference>
<dbReference type="PROSITE" id="PS00203">
    <property type="entry name" value="METALLOTHIONEIN_VRT"/>
    <property type="match status" value="1"/>
</dbReference>
<comment type="function">
    <text>Metallothioneins have a high content of cysteine residues that bind various heavy metals; these proteins are transcriptionally regulated by both heavy metals and glucocorticoids.</text>
</comment>
<comment type="domain">
    <text>Class I metallothioneins contain 2 metal-binding domains: four divalent ions are chelated within cluster A of the alpha domain and are coordinated via cysteinyl thiolate bridges to 11 cysteine ligands. Cluster B, the corresponding region within the beta domain, can ligate three divalent ions to 9 cysteines.</text>
</comment>
<comment type="similarity">
    <text evidence="3">Belongs to the metallothionein superfamily. Type 1 family.</text>
</comment>
<gene>
    <name type="primary">Mt1</name>
    <name type="synonym">Mt1a</name>
</gene>
<proteinExistence type="evidence at protein level"/>
<organism>
    <name type="scientific">Rattus norvegicus</name>
    <name type="common">Rat</name>
    <dbReference type="NCBI Taxonomy" id="10116"/>
    <lineage>
        <taxon>Eukaryota</taxon>
        <taxon>Metazoa</taxon>
        <taxon>Chordata</taxon>
        <taxon>Craniata</taxon>
        <taxon>Vertebrata</taxon>
        <taxon>Euteleostomi</taxon>
        <taxon>Mammalia</taxon>
        <taxon>Eutheria</taxon>
        <taxon>Euarchontoglires</taxon>
        <taxon>Glires</taxon>
        <taxon>Rodentia</taxon>
        <taxon>Myomorpha</taxon>
        <taxon>Muroidea</taxon>
        <taxon>Muridae</taxon>
        <taxon>Murinae</taxon>
        <taxon>Rattus</taxon>
    </lineage>
</organism>
<evidence type="ECO:0000250" key="1">
    <source>
        <dbReference type="UniProtKB" id="P02795"/>
    </source>
</evidence>
<evidence type="ECO:0000269" key="2">
    <source>
    </source>
</evidence>
<evidence type="ECO:0000305" key="3"/>
<sequence length="61" mass="6006">MDPNCSCSTGGSCTCSSSCGCKNCKCTSCKKSCCSCCPVGCSKCAQGCVCKGASDKCTCCA</sequence>
<accession>P02803</accession>
<name>MT1_RAT</name>
<keyword id="KW-0007">Acetylation</keyword>
<keyword id="KW-0903">Direct protein sequencing</keyword>
<keyword id="KW-0479">Metal-binding</keyword>
<keyword id="KW-0480">Metal-thiolate cluster</keyword>
<keyword id="KW-1185">Reference proteome</keyword>
<keyword id="KW-0862">Zinc</keyword>
<reference key="1">
    <citation type="journal article" date="1984" name="J. Biol. Chem.">
        <title>Structural characterization of the isoforms of neonatal and adult rat liver metallothionein.</title>
        <authorList>
            <person name="Winge D.R."/>
            <person name="Nielson K.B."/>
            <person name="Zeikus R.D."/>
            <person name="Gray W.R."/>
        </authorList>
    </citation>
    <scope>PROTEIN SEQUENCE</scope>
    <scope>ACETYLATION AT MET-1</scope>
</reference>
<reference key="2">
    <citation type="journal article" date="1986" name="Mol. Cell. Biol.">
        <title>Rat metallothionein-1 structural gene and three pseudogenes, one of which contains 5'-regulatory sequences.</title>
        <authorList>
            <person name="Andersen R.D."/>
            <person name="Birren B.W."/>
            <person name="Taplitz S.J."/>
            <person name="Herschman H.R."/>
        </authorList>
    </citation>
    <scope>NUCLEOTIDE SEQUENCE [GENOMIC DNA]</scope>
</reference>
<reference key="3">
    <citation type="journal article" date="1983" name="DNA">
        <title>Molecular cloning of the rat metallothionein 1 (MT-1) mRNA sequence.</title>
        <authorList>
            <person name="Andersen R.D."/>
            <person name="Birren B.W."/>
            <person name="Ganz T."/>
            <person name="Piletz J.E."/>
            <person name="Herschman H.R."/>
        </authorList>
    </citation>
    <scope>NUCLEOTIDE SEQUENCE [MRNA]</scope>
    <source>
        <tissue>Liver</tissue>
    </source>
</reference>
<reference key="4">
    <citation type="journal article" date="1987" name="Experientia Suppl.">
        <title>Rat metallothionein multigene family.</title>
        <authorList>
            <person name="Andersen R.D."/>
            <person name="Taplitz S.J."/>
            <person name="Birren B.W."/>
            <person name="Bristol G."/>
            <person name="Herschman H.R."/>
        </authorList>
    </citation>
    <scope>NUCLEOTIDE SEQUENCE</scope>
</reference>
<reference key="5">
    <citation type="journal article" date="2004" name="Genome Res.">
        <title>The status, quality, and expansion of the NIH full-length cDNA project: the Mammalian Gene Collection (MGC).</title>
        <authorList>
            <consortium name="The MGC Project Team"/>
        </authorList>
    </citation>
    <scope>NUCLEOTIDE SEQUENCE [LARGE SCALE MRNA]</scope>
    <source>
        <tissue>Pituitary</tissue>
    </source>
</reference>
<reference key="6">
    <citation type="journal article" date="1982" name="Biosci. Rep.">
        <title>Cloning of metallothionein cDNA from neonatal rat liver.</title>
        <authorList>
            <person name="Mercer J.F.B."/>
            <person name="Hudson P.J."/>
        </authorList>
    </citation>
    <scope>NUCLEOTIDE SEQUENCE [MRNA] OF 44-61</scope>
</reference>
<protein>
    <recommendedName>
        <fullName>Metallothionein-1</fullName>
        <shortName>MT-1</shortName>
    </recommendedName>
    <alternativeName>
        <fullName>Metallothionein-I</fullName>
        <shortName>MT-I</shortName>
    </alternativeName>
</protein>
<feature type="chain" id="PRO_0000197221" description="Metallothionein-1">
    <location>
        <begin position="1"/>
        <end position="61"/>
    </location>
</feature>
<feature type="region of interest" description="Beta">
    <location>
        <begin position="1"/>
        <end position="29"/>
    </location>
</feature>
<feature type="region of interest" description="Alpha">
    <location>
        <begin position="30"/>
        <end position="61"/>
    </location>
</feature>
<feature type="binding site" evidence="1">
    <location>
        <position position="5"/>
    </location>
    <ligand>
        <name>a divalent metal cation</name>
        <dbReference type="ChEBI" id="CHEBI:60240"/>
        <label>1</label>
        <note>in cluster B</note>
    </ligand>
</feature>
<feature type="binding site" evidence="1">
    <location>
        <position position="7"/>
    </location>
    <ligand>
        <name>a divalent metal cation</name>
        <dbReference type="ChEBI" id="CHEBI:60240"/>
        <label>1</label>
        <note>in cluster B</note>
    </ligand>
</feature>
<feature type="binding site" evidence="1">
    <location>
        <position position="7"/>
    </location>
    <ligand>
        <name>a divalent metal cation</name>
        <dbReference type="ChEBI" id="CHEBI:60240"/>
        <label>2</label>
        <note>in cluster B</note>
    </ligand>
</feature>
<feature type="binding site" evidence="1">
    <location>
        <position position="13"/>
    </location>
    <ligand>
        <name>a divalent metal cation</name>
        <dbReference type="ChEBI" id="CHEBI:60240"/>
        <label>2</label>
        <note>in cluster B</note>
    </ligand>
</feature>
<feature type="binding site" evidence="1">
    <location>
        <position position="15"/>
    </location>
    <ligand>
        <name>a divalent metal cation</name>
        <dbReference type="ChEBI" id="CHEBI:60240"/>
        <label>2</label>
        <note>in cluster B</note>
    </ligand>
</feature>
<feature type="binding site" evidence="1">
    <location>
        <position position="15"/>
    </location>
    <ligand>
        <name>a divalent metal cation</name>
        <dbReference type="ChEBI" id="CHEBI:60240"/>
        <label>3</label>
        <note>in cluster B</note>
    </ligand>
</feature>
<feature type="binding site" evidence="1">
    <location>
        <position position="19"/>
    </location>
    <ligand>
        <name>a divalent metal cation</name>
        <dbReference type="ChEBI" id="CHEBI:60240"/>
        <label>3</label>
        <note>in cluster B</note>
    </ligand>
</feature>
<feature type="binding site" evidence="1">
    <location>
        <position position="21"/>
    </location>
    <ligand>
        <name>a divalent metal cation</name>
        <dbReference type="ChEBI" id="CHEBI:60240"/>
        <label>1</label>
        <note>in cluster B</note>
    </ligand>
</feature>
<feature type="binding site" evidence="1">
    <location>
        <position position="24"/>
    </location>
    <ligand>
        <name>a divalent metal cation</name>
        <dbReference type="ChEBI" id="CHEBI:60240"/>
        <label>1</label>
        <note>in cluster B</note>
    </ligand>
</feature>
<feature type="binding site" evidence="1">
    <location>
        <position position="24"/>
    </location>
    <ligand>
        <name>a divalent metal cation</name>
        <dbReference type="ChEBI" id="CHEBI:60240"/>
        <label>3</label>
        <note>in cluster B</note>
    </ligand>
</feature>
<feature type="binding site" evidence="1">
    <location>
        <position position="26"/>
    </location>
    <ligand>
        <name>a divalent metal cation</name>
        <dbReference type="ChEBI" id="CHEBI:60240"/>
        <label>2</label>
        <note>in cluster B</note>
    </ligand>
</feature>
<feature type="binding site" evidence="1">
    <location>
        <position position="29"/>
    </location>
    <ligand>
        <name>a divalent metal cation</name>
        <dbReference type="ChEBI" id="CHEBI:60240"/>
        <label>3</label>
        <note>in cluster B</note>
    </ligand>
</feature>
<feature type="binding site" evidence="1">
    <location>
        <position position="33"/>
    </location>
    <ligand>
        <name>a divalent metal cation</name>
        <dbReference type="ChEBI" id="CHEBI:60240"/>
        <label>4</label>
        <note>in cluster A</note>
    </ligand>
</feature>
<feature type="binding site" evidence="1">
    <location>
        <position position="34"/>
    </location>
    <ligand>
        <name>a divalent metal cation</name>
        <dbReference type="ChEBI" id="CHEBI:60240"/>
        <label>4</label>
        <note>in cluster A</note>
    </ligand>
</feature>
<feature type="binding site" evidence="1">
    <location>
        <position position="34"/>
    </location>
    <ligand>
        <name>a divalent metal cation</name>
        <dbReference type="ChEBI" id="CHEBI:60240"/>
        <label>5</label>
        <note>in cluster A</note>
    </ligand>
</feature>
<feature type="binding site" evidence="1">
    <location>
        <position position="36"/>
    </location>
    <ligand>
        <name>a divalent metal cation</name>
        <dbReference type="ChEBI" id="CHEBI:60240"/>
        <label>5</label>
        <note>in cluster A</note>
    </ligand>
</feature>
<feature type="binding site" evidence="1">
    <location>
        <position position="37"/>
    </location>
    <ligand>
        <name>a divalent metal cation</name>
        <dbReference type="ChEBI" id="CHEBI:60240"/>
        <label>5</label>
        <note>in cluster A</note>
    </ligand>
</feature>
<feature type="binding site" evidence="1">
    <location>
        <position position="37"/>
    </location>
    <ligand>
        <name>a divalent metal cation</name>
        <dbReference type="ChEBI" id="CHEBI:60240"/>
        <label>6</label>
        <note>in cluster A</note>
    </ligand>
</feature>
<feature type="binding site" evidence="1">
    <location>
        <position position="41"/>
    </location>
    <ligand>
        <name>a divalent metal cation</name>
        <dbReference type="ChEBI" id="CHEBI:60240"/>
        <label>6</label>
        <note>in cluster A</note>
    </ligand>
</feature>
<feature type="binding site" evidence="1">
    <location>
        <position position="44"/>
    </location>
    <ligand>
        <name>a divalent metal cation</name>
        <dbReference type="ChEBI" id="CHEBI:60240"/>
        <label>4</label>
        <note>in cluster A</note>
    </ligand>
</feature>
<feature type="binding site" evidence="1">
    <location>
        <position position="44"/>
    </location>
    <ligand>
        <name>a divalent metal cation</name>
        <dbReference type="ChEBI" id="CHEBI:60240"/>
        <label>6</label>
        <note>in cluster A</note>
    </ligand>
</feature>
<feature type="binding site" evidence="1">
    <location>
        <position position="48"/>
    </location>
    <ligand>
        <name>a divalent metal cation</name>
        <dbReference type="ChEBI" id="CHEBI:60240"/>
        <label>4</label>
        <note>in cluster A</note>
    </ligand>
</feature>
<feature type="binding site" evidence="1">
    <location>
        <position position="50"/>
    </location>
    <ligand>
        <name>a divalent metal cation</name>
        <dbReference type="ChEBI" id="CHEBI:60240"/>
        <label>5</label>
        <note>in cluster A</note>
    </ligand>
</feature>
<feature type="binding site" evidence="1">
    <location>
        <position position="50"/>
    </location>
    <ligand>
        <name>a divalent metal cation</name>
        <dbReference type="ChEBI" id="CHEBI:60240"/>
        <label>7</label>
        <note>in cluster A</note>
    </ligand>
</feature>
<feature type="binding site" evidence="1">
    <location>
        <position position="57"/>
    </location>
    <ligand>
        <name>a divalent metal cation</name>
        <dbReference type="ChEBI" id="CHEBI:60240"/>
        <label>7</label>
        <note>in cluster A</note>
    </ligand>
</feature>
<feature type="binding site" evidence="1">
    <location>
        <position position="59"/>
    </location>
    <ligand>
        <name>a divalent metal cation</name>
        <dbReference type="ChEBI" id="CHEBI:60240"/>
        <label>7</label>
        <note>in cluster A</note>
    </ligand>
</feature>
<feature type="binding site" evidence="1">
    <location>
        <position position="60"/>
    </location>
    <ligand>
        <name>a divalent metal cation</name>
        <dbReference type="ChEBI" id="CHEBI:60240"/>
        <label>6</label>
        <note>in cluster A</note>
    </ligand>
</feature>
<feature type="binding site" evidence="1">
    <location>
        <position position="60"/>
    </location>
    <ligand>
        <name>a divalent metal cation</name>
        <dbReference type="ChEBI" id="CHEBI:60240"/>
        <label>7</label>
        <note>in cluster A</note>
    </ligand>
</feature>
<feature type="modified residue" description="N-acetylmethionine" evidence="2">
    <location>
        <position position="1"/>
    </location>
</feature>